<accession>B1IW97</accession>
<feature type="chain" id="PRO_1000076542" description="Iron-sulfur cluster assembly protein CyaY">
    <location>
        <begin position="1"/>
        <end position="106"/>
    </location>
</feature>
<evidence type="ECO:0000255" key="1">
    <source>
        <dbReference type="HAMAP-Rule" id="MF_00142"/>
    </source>
</evidence>
<reference key="1">
    <citation type="submission" date="2008-02" db="EMBL/GenBank/DDBJ databases">
        <title>Complete sequence of Escherichia coli C str. ATCC 8739.</title>
        <authorList>
            <person name="Copeland A."/>
            <person name="Lucas S."/>
            <person name="Lapidus A."/>
            <person name="Glavina del Rio T."/>
            <person name="Dalin E."/>
            <person name="Tice H."/>
            <person name="Bruce D."/>
            <person name="Goodwin L."/>
            <person name="Pitluck S."/>
            <person name="Kiss H."/>
            <person name="Brettin T."/>
            <person name="Detter J.C."/>
            <person name="Han C."/>
            <person name="Kuske C.R."/>
            <person name="Schmutz J."/>
            <person name="Larimer F."/>
            <person name="Land M."/>
            <person name="Hauser L."/>
            <person name="Kyrpides N."/>
            <person name="Mikhailova N."/>
            <person name="Ingram L."/>
            <person name="Richardson P."/>
        </authorList>
    </citation>
    <scope>NUCLEOTIDE SEQUENCE [LARGE SCALE GENOMIC DNA]</scope>
    <source>
        <strain>ATCC 8739 / DSM 1576 / NBRC 3972 / NCIMB 8545 / WDCM 00012 / Crooks</strain>
    </source>
</reference>
<keyword id="KW-0408">Iron</keyword>
<keyword id="KW-0479">Metal-binding</keyword>
<dbReference type="EMBL" id="CP000946">
    <property type="protein sequence ID" value="ACA79797.1"/>
    <property type="molecule type" value="Genomic_DNA"/>
</dbReference>
<dbReference type="RefSeq" id="WP_000999947.1">
    <property type="nucleotide sequence ID" value="NZ_MTFT01000015.1"/>
</dbReference>
<dbReference type="BMRB" id="B1IW97"/>
<dbReference type="SMR" id="B1IW97"/>
<dbReference type="GeneID" id="93778137"/>
<dbReference type="KEGG" id="ecl:EcolC_4200"/>
<dbReference type="HOGENOM" id="CLU_080880_3_0_6"/>
<dbReference type="GO" id="GO:0005829">
    <property type="term" value="C:cytosol"/>
    <property type="evidence" value="ECO:0007669"/>
    <property type="project" value="TreeGrafter"/>
</dbReference>
<dbReference type="GO" id="GO:0008199">
    <property type="term" value="F:ferric iron binding"/>
    <property type="evidence" value="ECO:0007669"/>
    <property type="project" value="InterPro"/>
</dbReference>
<dbReference type="GO" id="GO:0008198">
    <property type="term" value="F:ferrous iron binding"/>
    <property type="evidence" value="ECO:0007669"/>
    <property type="project" value="TreeGrafter"/>
</dbReference>
<dbReference type="GO" id="GO:0016226">
    <property type="term" value="P:iron-sulfur cluster assembly"/>
    <property type="evidence" value="ECO:0007669"/>
    <property type="project" value="UniProtKB-UniRule"/>
</dbReference>
<dbReference type="CDD" id="cd00503">
    <property type="entry name" value="Frataxin"/>
    <property type="match status" value="1"/>
</dbReference>
<dbReference type="FunFam" id="3.30.920.10:FF:000001">
    <property type="entry name" value="Iron-sulfur cluster assembly protein CyaY"/>
    <property type="match status" value="1"/>
</dbReference>
<dbReference type="Gene3D" id="3.30.920.10">
    <property type="entry name" value="Frataxin/CyaY"/>
    <property type="match status" value="1"/>
</dbReference>
<dbReference type="HAMAP" id="MF_00142">
    <property type="entry name" value="CyaY"/>
    <property type="match status" value="1"/>
</dbReference>
<dbReference type="InterPro" id="IPR047584">
    <property type="entry name" value="CyaY"/>
</dbReference>
<dbReference type="InterPro" id="IPR002908">
    <property type="entry name" value="Frataxin/CyaY"/>
</dbReference>
<dbReference type="InterPro" id="IPR036524">
    <property type="entry name" value="Frataxin/CyaY_sf"/>
</dbReference>
<dbReference type="InterPro" id="IPR020895">
    <property type="entry name" value="Frataxin_CS"/>
</dbReference>
<dbReference type="NCBIfam" id="TIGR03421">
    <property type="entry name" value="FeS_CyaY"/>
    <property type="match status" value="1"/>
</dbReference>
<dbReference type="PANTHER" id="PTHR16821">
    <property type="entry name" value="FRATAXIN"/>
    <property type="match status" value="1"/>
</dbReference>
<dbReference type="PANTHER" id="PTHR16821:SF2">
    <property type="entry name" value="FRATAXIN, MITOCHONDRIAL"/>
    <property type="match status" value="1"/>
</dbReference>
<dbReference type="Pfam" id="PF01491">
    <property type="entry name" value="Frataxin_Cyay"/>
    <property type="match status" value="1"/>
</dbReference>
<dbReference type="SMART" id="SM01219">
    <property type="entry name" value="Frataxin_Cyay"/>
    <property type="match status" value="1"/>
</dbReference>
<dbReference type="SUPFAM" id="SSF55387">
    <property type="entry name" value="Frataxin/Nqo15-like"/>
    <property type="match status" value="1"/>
</dbReference>
<dbReference type="PROSITE" id="PS01344">
    <property type="entry name" value="FRATAXIN_1"/>
    <property type="match status" value="1"/>
</dbReference>
<dbReference type="PROSITE" id="PS50810">
    <property type="entry name" value="FRATAXIN_2"/>
    <property type="match status" value="1"/>
</dbReference>
<gene>
    <name evidence="1" type="primary">cyaY</name>
    <name type="ordered locus">EcolC_4200</name>
</gene>
<proteinExistence type="inferred from homology"/>
<sequence length="106" mass="12231">MNDSEFHRLADQLWLTIEERLDDWDGDSDIDCEINGGVLTITFENGSKIIINRQEPLHQVWLATKQGGYHFDLKGDEWICDRSGETFWDLLEQAATQQAGETVSFR</sequence>
<protein>
    <recommendedName>
        <fullName evidence="1">Iron-sulfur cluster assembly protein CyaY</fullName>
    </recommendedName>
</protein>
<name>CYAY_ECOLC</name>
<organism>
    <name type="scientific">Escherichia coli (strain ATCC 8739 / DSM 1576 / NBRC 3972 / NCIMB 8545 / WDCM 00012 / Crooks)</name>
    <dbReference type="NCBI Taxonomy" id="481805"/>
    <lineage>
        <taxon>Bacteria</taxon>
        <taxon>Pseudomonadati</taxon>
        <taxon>Pseudomonadota</taxon>
        <taxon>Gammaproteobacteria</taxon>
        <taxon>Enterobacterales</taxon>
        <taxon>Enterobacteriaceae</taxon>
        <taxon>Escherichia</taxon>
    </lineage>
</organism>
<comment type="function">
    <text evidence="1">Involved in iron-sulfur (Fe-S) cluster assembly. May act as a regulator of Fe-S biogenesis.</text>
</comment>
<comment type="similarity">
    <text evidence="1">Belongs to the frataxin family.</text>
</comment>